<protein>
    <recommendedName>
        <fullName evidence="1">Chaperonin GroEL</fullName>
        <ecNumber evidence="1">5.6.1.7</ecNumber>
    </recommendedName>
    <alternativeName>
        <fullName evidence="1">60 kDa chaperonin</fullName>
    </alternativeName>
    <alternativeName>
        <fullName evidence="1">Chaperonin-60</fullName>
        <shortName evidence="1">Cpn60</shortName>
    </alternativeName>
</protein>
<sequence length="538" mass="57892">MAAKLVSLDMQARTALIRGLDIVADTVKITLGPKGRNVVLEKKFGAPVITNDGVTIAKEIDLEDPFENMGAQLVKEVASKTNDVAGDGTTTATVLAQALVHEGMKHVVAGANPMYVRRGIEKAVEKVVEELKKIAKPVETKQDIAHVAAISANNDTEIGNLIAEAMDKVGKDGVITVEESQGITTTLELVEGMQFDRGYLSAYMITDPERMEAVLEEPYILITDRKISAVSEILPILERVVQTGKPLVIIAEDVEGEALATLVVNKLRGVLQSLAVKAPGFGDRRKAMLQDIAILTGGQFISEETGIKLENVTLDMLGRAEKVRANKDKTTIIGGKGNKKDIEARIAQIKKQLEETDSEFDREKLQERLAKLAGGVAVIKVGAATEVELKEKKHRIEDALSATKAAVEEGIVPGGGVALLRTIKALDDVKVDNEDERIGVEIVRRSLDVPLKLIANNAGKEGSIIAEKVKEMDGPMGYDAANDRFVNMFEAGIVDPAKVTRSALQNAASIAALVLTTEGLVAEKPEKEKQTPPPPPEY</sequence>
<comment type="function">
    <text evidence="1">Together with its co-chaperonin GroES, plays an essential role in assisting protein folding. The GroEL-GroES system forms a nano-cage that allows encapsulation of the non-native substrate proteins and provides a physical environment optimized to promote and accelerate protein folding.</text>
</comment>
<comment type="catalytic activity">
    <reaction evidence="1">
        <text>ATP + H2O + a folded polypeptide = ADP + phosphate + an unfolded polypeptide.</text>
        <dbReference type="EC" id="5.6.1.7"/>
    </reaction>
</comment>
<comment type="subunit">
    <text evidence="1">Forms a cylinder of 14 subunits composed of two heptameric rings stacked back-to-back. Interacts with the co-chaperonin GroES.</text>
</comment>
<comment type="subcellular location">
    <subcellularLocation>
        <location evidence="1">Cytoplasm</location>
    </subcellularLocation>
</comment>
<comment type="similarity">
    <text evidence="1">Belongs to the chaperonin (HSP60) family.</text>
</comment>
<accession>B5YDR9</accession>
<feature type="chain" id="PRO_1000130004" description="Chaperonin GroEL">
    <location>
        <begin position="1"/>
        <end position="538"/>
    </location>
</feature>
<feature type="binding site" evidence="1">
    <location>
        <begin position="30"/>
        <end position="33"/>
    </location>
    <ligand>
        <name>ATP</name>
        <dbReference type="ChEBI" id="CHEBI:30616"/>
    </ligand>
</feature>
<feature type="binding site" evidence="1">
    <location>
        <begin position="87"/>
        <end position="91"/>
    </location>
    <ligand>
        <name>ATP</name>
        <dbReference type="ChEBI" id="CHEBI:30616"/>
    </ligand>
</feature>
<feature type="binding site" evidence="1">
    <location>
        <position position="415"/>
    </location>
    <ligand>
        <name>ATP</name>
        <dbReference type="ChEBI" id="CHEBI:30616"/>
    </ligand>
</feature>
<feature type="binding site" evidence="1">
    <location>
        <begin position="479"/>
        <end position="481"/>
    </location>
    <ligand>
        <name>ATP</name>
        <dbReference type="ChEBI" id="CHEBI:30616"/>
    </ligand>
</feature>
<feature type="binding site" evidence="1">
    <location>
        <position position="495"/>
    </location>
    <ligand>
        <name>ATP</name>
        <dbReference type="ChEBI" id="CHEBI:30616"/>
    </ligand>
</feature>
<keyword id="KW-0067">ATP-binding</keyword>
<keyword id="KW-0143">Chaperone</keyword>
<keyword id="KW-0963">Cytoplasm</keyword>
<keyword id="KW-0413">Isomerase</keyword>
<keyword id="KW-0547">Nucleotide-binding</keyword>
<gene>
    <name evidence="1" type="primary">groEL</name>
    <name evidence="1" type="synonym">groL</name>
    <name type="ordered locus">DICTH_0813</name>
</gene>
<reference key="1">
    <citation type="journal article" date="2014" name="Genome Announc.">
        <title>Complete Genome Sequence of the Extreme Thermophile Dictyoglomus thermophilum H-6-12.</title>
        <authorList>
            <person name="Coil D.A."/>
            <person name="Badger J.H."/>
            <person name="Forberger H.C."/>
            <person name="Riggs F."/>
            <person name="Madupu R."/>
            <person name="Fedorova N."/>
            <person name="Ward N."/>
            <person name="Robb F.T."/>
            <person name="Eisen J.A."/>
        </authorList>
    </citation>
    <scope>NUCLEOTIDE SEQUENCE [LARGE SCALE GENOMIC DNA]</scope>
    <source>
        <strain>ATCC 35947 / DSM 3960 / H-6-12</strain>
    </source>
</reference>
<dbReference type="EC" id="5.6.1.7" evidence="1"/>
<dbReference type="EMBL" id="CP001146">
    <property type="protein sequence ID" value="ACI18452.1"/>
    <property type="molecule type" value="Genomic_DNA"/>
</dbReference>
<dbReference type="RefSeq" id="WP_012547084.1">
    <property type="nucleotide sequence ID" value="NC_011297.1"/>
</dbReference>
<dbReference type="SMR" id="B5YDR9"/>
<dbReference type="STRING" id="309799.DICTH_0813"/>
<dbReference type="PaxDb" id="309799-DICTH_0813"/>
<dbReference type="KEGG" id="dth:DICTH_0813"/>
<dbReference type="eggNOG" id="COG0459">
    <property type="taxonomic scope" value="Bacteria"/>
</dbReference>
<dbReference type="HOGENOM" id="CLU_016503_3_0_0"/>
<dbReference type="OrthoDB" id="9766614at2"/>
<dbReference type="Proteomes" id="UP000001733">
    <property type="component" value="Chromosome"/>
</dbReference>
<dbReference type="GO" id="GO:0005737">
    <property type="term" value="C:cytoplasm"/>
    <property type="evidence" value="ECO:0007669"/>
    <property type="project" value="UniProtKB-SubCell"/>
</dbReference>
<dbReference type="GO" id="GO:0005524">
    <property type="term" value="F:ATP binding"/>
    <property type="evidence" value="ECO:0007669"/>
    <property type="project" value="UniProtKB-UniRule"/>
</dbReference>
<dbReference type="GO" id="GO:0140662">
    <property type="term" value="F:ATP-dependent protein folding chaperone"/>
    <property type="evidence" value="ECO:0007669"/>
    <property type="project" value="InterPro"/>
</dbReference>
<dbReference type="GO" id="GO:0016853">
    <property type="term" value="F:isomerase activity"/>
    <property type="evidence" value="ECO:0007669"/>
    <property type="project" value="UniProtKB-KW"/>
</dbReference>
<dbReference type="GO" id="GO:0051082">
    <property type="term" value="F:unfolded protein binding"/>
    <property type="evidence" value="ECO:0007669"/>
    <property type="project" value="UniProtKB-UniRule"/>
</dbReference>
<dbReference type="GO" id="GO:0042026">
    <property type="term" value="P:protein refolding"/>
    <property type="evidence" value="ECO:0007669"/>
    <property type="project" value="UniProtKB-UniRule"/>
</dbReference>
<dbReference type="CDD" id="cd03344">
    <property type="entry name" value="GroEL"/>
    <property type="match status" value="1"/>
</dbReference>
<dbReference type="FunFam" id="3.50.7.10:FF:000001">
    <property type="entry name" value="60 kDa chaperonin"/>
    <property type="match status" value="1"/>
</dbReference>
<dbReference type="Gene3D" id="3.50.7.10">
    <property type="entry name" value="GroEL"/>
    <property type="match status" value="1"/>
</dbReference>
<dbReference type="Gene3D" id="1.10.560.10">
    <property type="entry name" value="GroEL-like equatorial domain"/>
    <property type="match status" value="1"/>
</dbReference>
<dbReference type="Gene3D" id="3.30.260.10">
    <property type="entry name" value="TCP-1-like chaperonin intermediate domain"/>
    <property type="match status" value="1"/>
</dbReference>
<dbReference type="HAMAP" id="MF_00600">
    <property type="entry name" value="CH60"/>
    <property type="match status" value="1"/>
</dbReference>
<dbReference type="InterPro" id="IPR018370">
    <property type="entry name" value="Chaperonin_Cpn60_CS"/>
</dbReference>
<dbReference type="InterPro" id="IPR001844">
    <property type="entry name" value="Cpn60/GroEL"/>
</dbReference>
<dbReference type="InterPro" id="IPR002423">
    <property type="entry name" value="Cpn60/GroEL/TCP-1"/>
</dbReference>
<dbReference type="InterPro" id="IPR027409">
    <property type="entry name" value="GroEL-like_apical_dom_sf"/>
</dbReference>
<dbReference type="InterPro" id="IPR027413">
    <property type="entry name" value="GROEL-like_equatorial_sf"/>
</dbReference>
<dbReference type="InterPro" id="IPR027410">
    <property type="entry name" value="TCP-1-like_intermed_sf"/>
</dbReference>
<dbReference type="NCBIfam" id="TIGR02348">
    <property type="entry name" value="GroEL"/>
    <property type="match status" value="1"/>
</dbReference>
<dbReference type="NCBIfam" id="NF000592">
    <property type="entry name" value="PRK00013.1"/>
    <property type="match status" value="1"/>
</dbReference>
<dbReference type="NCBIfam" id="NF009487">
    <property type="entry name" value="PRK12849.1"/>
    <property type="match status" value="1"/>
</dbReference>
<dbReference type="NCBIfam" id="NF009488">
    <property type="entry name" value="PRK12850.1"/>
    <property type="match status" value="1"/>
</dbReference>
<dbReference type="NCBIfam" id="NF009489">
    <property type="entry name" value="PRK12851.1"/>
    <property type="match status" value="1"/>
</dbReference>
<dbReference type="PANTHER" id="PTHR45633">
    <property type="entry name" value="60 KDA HEAT SHOCK PROTEIN, MITOCHONDRIAL"/>
    <property type="match status" value="1"/>
</dbReference>
<dbReference type="Pfam" id="PF00118">
    <property type="entry name" value="Cpn60_TCP1"/>
    <property type="match status" value="1"/>
</dbReference>
<dbReference type="PRINTS" id="PR00298">
    <property type="entry name" value="CHAPERONIN60"/>
</dbReference>
<dbReference type="SUPFAM" id="SSF52029">
    <property type="entry name" value="GroEL apical domain-like"/>
    <property type="match status" value="1"/>
</dbReference>
<dbReference type="SUPFAM" id="SSF48592">
    <property type="entry name" value="GroEL equatorial domain-like"/>
    <property type="match status" value="1"/>
</dbReference>
<dbReference type="SUPFAM" id="SSF54849">
    <property type="entry name" value="GroEL-intermediate domain like"/>
    <property type="match status" value="1"/>
</dbReference>
<dbReference type="PROSITE" id="PS00296">
    <property type="entry name" value="CHAPERONINS_CPN60"/>
    <property type="match status" value="1"/>
</dbReference>
<organism>
    <name type="scientific">Dictyoglomus thermophilum (strain ATCC 35947 / DSM 3960 / H-6-12)</name>
    <dbReference type="NCBI Taxonomy" id="309799"/>
    <lineage>
        <taxon>Bacteria</taxon>
        <taxon>Pseudomonadati</taxon>
        <taxon>Dictyoglomota</taxon>
        <taxon>Dictyoglomia</taxon>
        <taxon>Dictyoglomales</taxon>
        <taxon>Dictyoglomaceae</taxon>
        <taxon>Dictyoglomus</taxon>
    </lineage>
</organism>
<name>CH60_DICT6</name>
<evidence type="ECO:0000255" key="1">
    <source>
        <dbReference type="HAMAP-Rule" id="MF_00600"/>
    </source>
</evidence>
<proteinExistence type="inferred from homology"/>